<proteinExistence type="inferred from homology"/>
<dbReference type="EMBL" id="CY021712">
    <property type="protein sequence ID" value="ABP49331.1"/>
    <property type="molecule type" value="Viral_cRNA"/>
</dbReference>
<dbReference type="SMR" id="A4U6V6"/>
<dbReference type="PRO" id="PR:A4U6V6"/>
<dbReference type="Proteomes" id="UP000008433">
    <property type="component" value="Genome"/>
</dbReference>
<dbReference type="GO" id="GO:0019029">
    <property type="term" value="C:helical viral capsid"/>
    <property type="evidence" value="ECO:0007669"/>
    <property type="project" value="UniProtKB-UniRule"/>
</dbReference>
<dbReference type="GO" id="GO:0043657">
    <property type="term" value="C:host cell"/>
    <property type="evidence" value="ECO:0007669"/>
    <property type="project" value="GOC"/>
</dbReference>
<dbReference type="GO" id="GO:0042025">
    <property type="term" value="C:host cell nucleus"/>
    <property type="evidence" value="ECO:0007669"/>
    <property type="project" value="UniProtKB-SubCell"/>
</dbReference>
<dbReference type="GO" id="GO:1990904">
    <property type="term" value="C:ribonucleoprotein complex"/>
    <property type="evidence" value="ECO:0007669"/>
    <property type="project" value="UniProtKB-KW"/>
</dbReference>
<dbReference type="GO" id="GO:0019013">
    <property type="term" value="C:viral nucleocapsid"/>
    <property type="evidence" value="ECO:0007669"/>
    <property type="project" value="UniProtKB-UniRule"/>
</dbReference>
<dbReference type="GO" id="GO:0003723">
    <property type="term" value="F:RNA binding"/>
    <property type="evidence" value="ECO:0007669"/>
    <property type="project" value="UniProtKB-UniRule"/>
</dbReference>
<dbReference type="GO" id="GO:0005198">
    <property type="term" value="F:structural molecule activity"/>
    <property type="evidence" value="ECO:0007669"/>
    <property type="project" value="UniProtKB-UniRule"/>
</dbReference>
<dbReference type="GO" id="GO:0046718">
    <property type="term" value="P:symbiont entry into host cell"/>
    <property type="evidence" value="ECO:0007669"/>
    <property type="project" value="UniProtKB-KW"/>
</dbReference>
<dbReference type="GO" id="GO:0075732">
    <property type="term" value="P:viral penetration into host nucleus"/>
    <property type="evidence" value="ECO:0007669"/>
    <property type="project" value="UniProtKB-UniRule"/>
</dbReference>
<dbReference type="HAMAP" id="MF_04070">
    <property type="entry name" value="INFV_NCAP"/>
    <property type="match status" value="1"/>
</dbReference>
<dbReference type="InterPro" id="IPR002141">
    <property type="entry name" value="Flu_NP"/>
</dbReference>
<dbReference type="Pfam" id="PF00506">
    <property type="entry name" value="Flu_NP"/>
    <property type="match status" value="1"/>
</dbReference>
<dbReference type="SUPFAM" id="SSF161003">
    <property type="entry name" value="flu NP-like"/>
    <property type="match status" value="1"/>
</dbReference>
<organism>
    <name type="scientific">Influenza A virus (strain A/USA:Huston/AA/1945 H1N1)</name>
    <dbReference type="NCBI Taxonomy" id="425551"/>
    <lineage>
        <taxon>Viruses</taxon>
        <taxon>Riboviria</taxon>
        <taxon>Orthornavirae</taxon>
        <taxon>Negarnaviricota</taxon>
        <taxon>Polyploviricotina</taxon>
        <taxon>Insthoviricetes</taxon>
        <taxon>Articulavirales</taxon>
        <taxon>Orthomyxoviridae</taxon>
        <taxon>Alphainfluenzavirus</taxon>
        <taxon>Alphainfluenzavirus influenzae</taxon>
        <taxon>Influenza A virus</taxon>
    </lineage>
</organism>
<organismHost>
    <name type="scientific">Aves</name>
    <dbReference type="NCBI Taxonomy" id="8782"/>
</organismHost>
<organismHost>
    <name type="scientific">Homo sapiens</name>
    <name type="common">Human</name>
    <dbReference type="NCBI Taxonomy" id="9606"/>
</organismHost>
<organismHost>
    <name type="scientific">Sus scrofa</name>
    <name type="common">Pig</name>
    <dbReference type="NCBI Taxonomy" id="9823"/>
</organismHost>
<sequence length="498" mass="56215">MASQGTKRSYEQMETDGERQNATEIRASVGKMISGIGRFYIQMCTELKLSDYEGRLIQNSLTIERMVLSAFDERRNKYLEEHPSAGKDPKKTGGPIYKRVDGKWMRELILYDKEEIRRIWRQANNGDDATAGLTHMMIWHSNLNDATYQRTRALVRTGMDPRMCSLMQGSTLPRRSGAAGAAVKGIGTMVMELIRMIKRGINDRNFWRGENGRKTRIAYERMCNILKGKFQTAAQRAMMDQVRESRNPGNAEFEDLTFLARSALILRGSVAHKSCLPACVYGPAVASGYDFEREGYSLVGIDPFKLLQNSQVYSLIRPNENPAHKSQLVWMACHSAAFEDLRVSSFIRGTKVIPRGKLSTRGVQIASNENMETMGSSTLELRSRYWAIRTRSGGNTNQQRASAGQISIQPTFSVQRNLPFDRTTIMAAFTGNTEGRTSDMRTEIIRMMESARPEDVSFQGRGVFELSDEKATNPIVPSFDMSNEGSYFFGDNAEEYDN</sequence>
<keyword id="KW-0167">Capsid protein</keyword>
<keyword id="KW-1139">Helical capsid protein</keyword>
<keyword id="KW-1048">Host nucleus</keyword>
<keyword id="KW-0945">Host-virus interaction</keyword>
<keyword id="KW-0687">Ribonucleoprotein</keyword>
<keyword id="KW-0694">RNA-binding</keyword>
<keyword id="KW-0543">Viral nucleoprotein</keyword>
<keyword id="KW-1163">Viral penetration into host nucleus</keyword>
<keyword id="KW-0946">Virion</keyword>
<keyword id="KW-1160">Virus entry into host cell</keyword>
<accession>A4U6V6</accession>
<protein>
    <recommendedName>
        <fullName evidence="1">Nucleoprotein</fullName>
    </recommendedName>
    <alternativeName>
        <fullName evidence="1">Nucleocapsid protein</fullName>
        <shortName evidence="1">Protein N</shortName>
    </alternativeName>
</protein>
<name>NCAP_I45A0</name>
<comment type="function">
    <text evidence="1">Encapsidates the negative strand viral RNA, protecting it from nucleases. The encapsidated genomic RNA is termed the ribonucleoprotein (RNP) and serves as template for transcription and replication. The RNP needs to be localized in the host nucleus to start an infectious cycle, but is too large to diffuse through the nuclear pore complex. NP comprises at least 2 nuclear localization signals that are responsible for the active RNP import into the nucleus through cellular importin alpha/beta pathway. Later in the infection, nclear export of RNPs are mediated through viral proteins NEP interacting with M1 which binds nucleoproteins. It is possible that nucleoprotein binds directly host exportin-1/XPO1 and plays an active role in RNPs nuclear export. M1 interaction with RNP seems to hide nucleoprotein's nuclear localization signals. Soon after a virion infects a new cell, M1 dissociates from the RNP under acidification of the virion driven by M2 protein. Dissociation of M1 from RNP unmasks nucleoprotein's nuclear localization signals, targeting the RNP to the nucleus.</text>
</comment>
<comment type="subunit">
    <text evidence="1">Homomultimerizes to form the nucleocapsid. May bind host exportin-1/XPO1. Binds to viral genomic RNA. Protein-RNA contacts are mediated by a combination of electrostatic interactions between positively charged residues and the phosphate backbone and planar interactions between aromatic side chains and bases.</text>
</comment>
<comment type="subcellular location">
    <subcellularLocation>
        <location evidence="1">Virion</location>
    </subcellularLocation>
    <subcellularLocation>
        <location evidence="1">Host nucleus</location>
    </subcellularLocation>
</comment>
<comment type="PTM">
    <text evidence="1">Late in virus-infected cells, may be cleaved from a 56-kDa protein to a 53-kDa protein by a cellular caspase. This cleavage might be a marker for the onset of apoptosis in infected cells or have a specific function in virus host interaction.</text>
</comment>
<comment type="similarity">
    <text evidence="1">Belongs to the influenza viruses nucleoprotein family.</text>
</comment>
<reference key="1">
    <citation type="submission" date="2007-04" db="EMBL/GenBank/DDBJ databases">
        <title>The NIAID influenza genome sequencing project.</title>
        <authorList>
            <person name="Ghedin E."/>
            <person name="Spiro D."/>
            <person name="Miller N."/>
            <person name="Zaborsky J."/>
            <person name="Feldblyum T."/>
            <person name="Subbu V."/>
            <person name="Shumway M."/>
            <person name="Sparenborg J."/>
            <person name="Groveman L."/>
            <person name="Halpin R."/>
            <person name="Sitz J."/>
            <person name="Koo H."/>
            <person name="Salzberg S.L."/>
            <person name="Webster R.G."/>
            <person name="Hoffmann E."/>
            <person name="Krauss S."/>
            <person name="Naeve C."/>
            <person name="Bao Y."/>
            <person name="Bolotov P."/>
            <person name="Dernovoy D."/>
            <person name="Kiryutin B."/>
            <person name="Lipman D.J."/>
            <person name="Tatusova T."/>
        </authorList>
    </citation>
    <scope>NUCLEOTIDE SEQUENCE [GENOMIC RNA]</scope>
</reference>
<reference key="2">
    <citation type="submission" date="2007-04" db="EMBL/GenBank/DDBJ databases">
        <authorList>
            <consortium name="The NIAID Influenza Genome Sequencing Consortium"/>
        </authorList>
    </citation>
    <scope>NUCLEOTIDE SEQUENCE [GENOMIC RNA]</scope>
</reference>
<feature type="chain" id="PRO_0000372937" description="Nucleoprotein">
    <location>
        <begin position="1"/>
        <end position="498"/>
    </location>
</feature>
<feature type="region of interest" description="Disordered" evidence="2">
    <location>
        <begin position="1"/>
        <end position="21"/>
    </location>
</feature>
<feature type="short sequence motif" description="Unconventional nuclear localization signal" evidence="1">
    <location>
        <begin position="1"/>
        <end position="18"/>
    </location>
</feature>
<feature type="short sequence motif" description="Bipartite nuclear localization signal" evidence="1">
    <location>
        <begin position="198"/>
        <end position="216"/>
    </location>
</feature>
<feature type="compositionally biased region" description="Basic and acidic residues" evidence="2">
    <location>
        <begin position="8"/>
        <end position="21"/>
    </location>
</feature>
<evidence type="ECO:0000255" key="1">
    <source>
        <dbReference type="HAMAP-Rule" id="MF_04070"/>
    </source>
</evidence>
<evidence type="ECO:0000256" key="2">
    <source>
        <dbReference type="SAM" id="MobiDB-lite"/>
    </source>
</evidence>
<gene>
    <name evidence="1" type="primary">NP</name>
</gene>